<dbReference type="EMBL" id="U14003">
    <property type="protein sequence ID" value="AAA97116.1"/>
    <property type="molecule type" value="Genomic_DNA"/>
</dbReference>
<dbReference type="EMBL" id="U00096">
    <property type="protein sequence ID" value="AAC77177.1"/>
    <property type="molecule type" value="Genomic_DNA"/>
</dbReference>
<dbReference type="EMBL" id="AP009048">
    <property type="protein sequence ID" value="BAE78221.1"/>
    <property type="molecule type" value="Genomic_DNA"/>
</dbReference>
<dbReference type="PIR" id="S56445">
    <property type="entry name" value="S56445"/>
</dbReference>
<dbReference type="RefSeq" id="NP_418641.1">
    <property type="nucleotide sequence ID" value="NC_000913.3"/>
</dbReference>
<dbReference type="RefSeq" id="WP_001269327.1">
    <property type="nucleotide sequence ID" value="NZ_SSUV01000014.1"/>
</dbReference>
<dbReference type="PDB" id="2LY3">
    <property type="method" value="NMR"/>
    <property type="chains" value="1=22-102"/>
</dbReference>
<dbReference type="PDB" id="4BZA">
    <property type="method" value="X-ray"/>
    <property type="resolution" value="1.84 A"/>
    <property type="chains" value="A=22-275"/>
</dbReference>
<dbReference type="PDB" id="4C00">
    <property type="method" value="X-ray"/>
    <property type="resolution" value="2.25 A"/>
    <property type="chains" value="A=22-577"/>
</dbReference>
<dbReference type="PDBsum" id="2LY3"/>
<dbReference type="PDBsum" id="4BZA"/>
<dbReference type="PDBsum" id="4C00"/>
<dbReference type="BMRB" id="P0ADE4"/>
<dbReference type="SMR" id="P0ADE4"/>
<dbReference type="BioGRID" id="4259308">
    <property type="interactions" value="285"/>
</dbReference>
<dbReference type="ComplexPortal" id="CPX-5890">
    <property type="entry name" value="Translocation and assembly module complex"/>
</dbReference>
<dbReference type="DIP" id="DIP-51058N"/>
<dbReference type="FunCoup" id="P0ADE4">
    <property type="interactions" value="127"/>
</dbReference>
<dbReference type="IntAct" id="P0ADE4">
    <property type="interactions" value="7"/>
</dbReference>
<dbReference type="STRING" id="511145.b4220"/>
<dbReference type="TCDB" id="1.B.33.2.4">
    <property type="family name" value="the outer membrane protein insertion porin (bam complex) (ompip) family"/>
</dbReference>
<dbReference type="jPOST" id="P0ADE4"/>
<dbReference type="PaxDb" id="511145-b4220"/>
<dbReference type="EnsemblBacteria" id="AAC77177">
    <property type="protein sequence ID" value="AAC77177"/>
    <property type="gene ID" value="b4220"/>
</dbReference>
<dbReference type="GeneID" id="75202460"/>
<dbReference type="GeneID" id="948733"/>
<dbReference type="KEGG" id="ecj:JW4179"/>
<dbReference type="KEGG" id="eco:b4220"/>
<dbReference type="KEGG" id="ecoc:C3026_22795"/>
<dbReference type="PATRIC" id="fig|1411691.4.peg.2480"/>
<dbReference type="EchoBASE" id="EB2406"/>
<dbReference type="eggNOG" id="COG0729">
    <property type="taxonomic scope" value="Bacteria"/>
</dbReference>
<dbReference type="HOGENOM" id="CLU_018618_1_0_6"/>
<dbReference type="InParanoid" id="P0ADE4"/>
<dbReference type="OMA" id="NTTMLLY"/>
<dbReference type="OrthoDB" id="9803054at2"/>
<dbReference type="PhylomeDB" id="P0ADE4"/>
<dbReference type="BioCyc" id="EcoCyc:G7874-MONOMER"/>
<dbReference type="EvolutionaryTrace" id="P0ADE4"/>
<dbReference type="PRO" id="PR:P0ADE4"/>
<dbReference type="Proteomes" id="UP000000625">
    <property type="component" value="Chromosome"/>
</dbReference>
<dbReference type="GO" id="GO:0009279">
    <property type="term" value="C:cell outer membrane"/>
    <property type="evidence" value="ECO:0000314"/>
    <property type="project" value="EcoCyc"/>
</dbReference>
<dbReference type="GO" id="GO:0005886">
    <property type="term" value="C:plasma membrane"/>
    <property type="evidence" value="ECO:0000314"/>
    <property type="project" value="ComplexPortal"/>
</dbReference>
<dbReference type="GO" id="GO:0097347">
    <property type="term" value="C:TAM protein secretion complex"/>
    <property type="evidence" value="ECO:0000314"/>
    <property type="project" value="EcoCyc"/>
</dbReference>
<dbReference type="GO" id="GO:0089705">
    <property type="term" value="P:protein localization to outer membrane"/>
    <property type="evidence" value="ECO:0000314"/>
    <property type="project" value="ComplexPortal"/>
</dbReference>
<dbReference type="GO" id="GO:0009306">
    <property type="term" value="P:protein secretion"/>
    <property type="evidence" value="ECO:0000315"/>
    <property type="project" value="EcoCyc"/>
</dbReference>
<dbReference type="FunFam" id="2.40.160.50:FF:000003">
    <property type="entry name" value="Outer membrane protein, OMP85 family"/>
    <property type="match status" value="1"/>
</dbReference>
<dbReference type="FunFam" id="3.10.20.310:FF:000007">
    <property type="entry name" value="Outer membrane protein, OMP85 family"/>
    <property type="match status" value="1"/>
</dbReference>
<dbReference type="FunFam" id="3.10.20.310:FF:000008">
    <property type="entry name" value="Outer membrane protein, OMP85 family"/>
    <property type="match status" value="1"/>
</dbReference>
<dbReference type="FunFam" id="3.10.20.310:FF:000009">
    <property type="entry name" value="Outer membrane protein, OMP85 family"/>
    <property type="match status" value="1"/>
</dbReference>
<dbReference type="Gene3D" id="3.10.20.310">
    <property type="entry name" value="membrane protein fhac"/>
    <property type="match status" value="3"/>
</dbReference>
<dbReference type="Gene3D" id="2.40.160.50">
    <property type="entry name" value="membrane protein fhac: a member of the omp85/tpsb transporter family"/>
    <property type="match status" value="1"/>
</dbReference>
<dbReference type="InterPro" id="IPR000184">
    <property type="entry name" value="Bac_surfAg_D15"/>
</dbReference>
<dbReference type="InterPro" id="IPR010827">
    <property type="entry name" value="BamA/TamA_POTRA"/>
</dbReference>
<dbReference type="InterPro" id="IPR039910">
    <property type="entry name" value="D15-like"/>
</dbReference>
<dbReference type="InterPro" id="IPR034746">
    <property type="entry name" value="POTRA"/>
</dbReference>
<dbReference type="InterPro" id="IPR035243">
    <property type="entry name" value="TamA_POTRA_Dom_1"/>
</dbReference>
<dbReference type="PANTHER" id="PTHR12815">
    <property type="entry name" value="SORTING AND ASSEMBLY MACHINERY SAMM50 PROTEIN FAMILY MEMBER"/>
    <property type="match status" value="1"/>
</dbReference>
<dbReference type="PANTHER" id="PTHR12815:SF47">
    <property type="entry name" value="TRANSLOCATION AND ASSEMBLY MODULE SUBUNIT TAMA"/>
    <property type="match status" value="1"/>
</dbReference>
<dbReference type="Pfam" id="PF01103">
    <property type="entry name" value="Omp85"/>
    <property type="match status" value="1"/>
</dbReference>
<dbReference type="Pfam" id="PF07244">
    <property type="entry name" value="POTRA"/>
    <property type="match status" value="1"/>
</dbReference>
<dbReference type="Pfam" id="PF17243">
    <property type="entry name" value="POTRA_TamA_1"/>
    <property type="match status" value="1"/>
</dbReference>
<dbReference type="PROSITE" id="PS51779">
    <property type="entry name" value="POTRA"/>
    <property type="match status" value="1"/>
</dbReference>
<proteinExistence type="evidence at protein level"/>
<sequence length="577" mass="64796">MRYIRQLCCVSLLCLSGSAVAANVRLQVEGLSGQLEKNVRAQLSTIESDEVTPDRRFRARVDDAIREGLKALGYYQPTIEFDLRPPPKKGRQVLIAKVTPGVPVLIGGTDVVLRGGARTDKDYLKLLDTRPAIGTVLNQGDYENFKKSLTSIALRKGYFDSEFTKAQLGIALGLHKAFWDIDYNSGERYRFGHVTFEGSQIRDEYLQNLVPFKEGDEYESKDLAELNRRLSATGWFNSVVVAPQFDKARETKVLPLTGVVSPRTENTIETGVGYSTDVGPRVKATWKKPWMNSYGHSLTTSTSISAPEQTLDFSYKMPLLKNPLEQYYLVQGGFKRTDLNDTESDSTTLVASRYWDLSSGWQRAINLRWSLDHFTQGEITNTTMLFYPGVMISRTRSRGGLMPTWGDSQRYSIDYSNTAWGSDVDFSVFQAQNVWIRTLYDRHRFVTRGTLGWIETGDFDKVPPDLRFFAGGDRSIRGYKYKSIAPKYANGDLKGASKLITGSLEYQYNVTGKWWGAVFVDSGEAVSDIRRSDFKTGTGVGVRWESPVGPIKLDFAVPVADKDEHGLQFYIGLGPEL</sequence>
<accession>P0ADE4</accession>
<accession>P39320</accession>
<accession>Q2M685</accession>
<organism>
    <name type="scientific">Escherichia coli (strain K12)</name>
    <dbReference type="NCBI Taxonomy" id="83333"/>
    <lineage>
        <taxon>Bacteria</taxon>
        <taxon>Pseudomonadati</taxon>
        <taxon>Pseudomonadota</taxon>
        <taxon>Gammaproteobacteria</taxon>
        <taxon>Enterobacterales</taxon>
        <taxon>Enterobacteriaceae</taxon>
        <taxon>Escherichia</taxon>
    </lineage>
</organism>
<protein>
    <recommendedName>
        <fullName evidence="11">Translocation and assembly module subunit TamA</fullName>
    </recommendedName>
    <alternativeName>
        <fullName>Autotransporter assembly factor TamA</fullName>
    </alternativeName>
</protein>
<comment type="function">
    <text evidence="3 4 6 8 9">Component of the translocation and assembly module (TAM), which facilitates the insertion and assembly of specific beta-barrel proteins into the outer membrane (PubMed:22466966, PubMed:25341963, PubMed:28752534, PubMed:39174534). Promotes the assembly and secretion across the outer membrane of a subset of autotransporters, such as Ag43 (PubMed:22466966, PubMed:25341963). Involved in the assembly of the outer membrane usher protein FimD (PubMed:28752534). In vitro, when TAM is reconstituted into preformed liposomes, it can promote the assembly of several outer membrane proteins, including OmpA, EspP, Ag43 and FadL (PubMed:39174534). TamA is sufficient to catalyze a low level of outer membrane protein (OMP) assembly, but both TamA and TamB are required for efficient OMP assembly (PubMed:39174534). TamA must bind to the beta signal of client proteins to promote their assembly (PubMed:39174534). Has anion selective channel-forming ability, but the physiological relevance of this activity is unclear (PubMed:17214547).</text>
</comment>
<comment type="activity regulation">
    <text evidence="9">TAM-mediated outer membrane protein folding is significantly inhibited by darobactin, which acts as a competitive inhibitor of beta signal binding.</text>
</comment>
<comment type="subunit">
    <text evidence="4 6 7 9">Interacts with TamB to form the translocation and assembly module (TAM).</text>
</comment>
<comment type="interaction">
    <interactant intactId="EBI-1114298">
        <id>P0ADE4</id>
    </interactant>
    <interactant intactId="EBI-1117885">
        <id>P39321</id>
        <label>tamB</label>
    </interactant>
    <organismsDiffer>false</organismsDiffer>
    <experiments>3</experiments>
</comment>
<comment type="subcellular location">
    <subcellularLocation>
        <location evidence="2 3 4 5 6">Cell outer membrane</location>
    </subcellularLocation>
</comment>
<comment type="domain">
    <text evidence="5 6 7">Contains 3 N-terminal periplasmic polypeptide transport-associated (POTRA) domains and a C-terminal 16-stranded beta-barrel transmembrane region (PubMed:24056943, PubMed:25341963). The 3 POTRA domains seem to form a rigid body (unlike BamA where the 5 POTRA domains are able to move independently) (PubMed:26243377). Upon substrate binding (Ag43, AC P39180) the 3 POTRA domains move away from the inner surface of the outer membrane by about 30 Angstroms, which would deform either the outer membrane or TamB and may provide force to reset TAM (PubMed:25341963). POTRA1 is required for interaction with TamB (PubMed:26243377). Deletion of POTRA1 decreases Ag43 binding to this protein, whereas deletion of POTRA1 and 2 obviates binding to Ag43 (PubMed:26243377). The beta-barrel is closed on the extracellular face by loop 6 (residues 456-495), while the C-terminal beta-strand forms an inward kink which may act as a gate for substrate access from the periplasm (PubMed:24056943). This kink weakens the beta-strand pair between the first and last strands which may contribute to gating and substrate translocation (PubMed:24056943).</text>
</comment>
<comment type="domain">
    <text evidence="8">Possesses a dynamic lateral gate, which may provide a different environment for substrate engagement when compared to BamA, explaining how TAM may be more effective than the BAM complex in the folding of certain substrate proteins.</text>
</comment>
<comment type="disruption phenotype">
    <text evidence="3 4">Not essential, cells grow more slowly than wild-type (PubMed:17214547). No changes in permeability or outer membrane integrity (PubMed:17214547). Loss of cell aggregation when adhesins are over-expressed in a double tamA-tamB deletion mutant (PubMed:22466966).</text>
</comment>
<comment type="similarity">
    <text evidence="12">Belongs to the TamA family.</text>
</comment>
<reference key="1">
    <citation type="journal article" date="1995" name="Nucleic Acids Res.">
        <title>Analysis of the Escherichia coli genome VI: DNA sequence of the region from 92.8 through 100 minutes.</title>
        <authorList>
            <person name="Burland V.D."/>
            <person name="Plunkett G. III"/>
            <person name="Sofia H.J."/>
            <person name="Daniels D.L."/>
            <person name="Blattner F.R."/>
        </authorList>
    </citation>
    <scope>NUCLEOTIDE SEQUENCE [LARGE SCALE GENOMIC DNA]</scope>
    <source>
        <strain>K12 / MG1655 / ATCC 47076</strain>
    </source>
</reference>
<reference key="2">
    <citation type="journal article" date="1997" name="Science">
        <title>The complete genome sequence of Escherichia coli K-12.</title>
        <authorList>
            <person name="Blattner F.R."/>
            <person name="Plunkett G. III"/>
            <person name="Bloch C.A."/>
            <person name="Perna N.T."/>
            <person name="Burland V."/>
            <person name="Riley M."/>
            <person name="Collado-Vides J."/>
            <person name="Glasner J.D."/>
            <person name="Rode C.K."/>
            <person name="Mayhew G.F."/>
            <person name="Gregor J."/>
            <person name="Davis N.W."/>
            <person name="Kirkpatrick H.A."/>
            <person name="Goeden M.A."/>
            <person name="Rose D.J."/>
            <person name="Mau B."/>
            <person name="Shao Y."/>
        </authorList>
    </citation>
    <scope>NUCLEOTIDE SEQUENCE [LARGE SCALE GENOMIC DNA]</scope>
    <source>
        <strain>K12 / MG1655 / ATCC 47076</strain>
    </source>
</reference>
<reference key="3">
    <citation type="journal article" date="2006" name="Mol. Syst. Biol.">
        <title>Highly accurate genome sequences of Escherichia coli K-12 strains MG1655 and W3110.</title>
        <authorList>
            <person name="Hayashi K."/>
            <person name="Morooka N."/>
            <person name="Yamamoto Y."/>
            <person name="Fujita K."/>
            <person name="Isono K."/>
            <person name="Choi S."/>
            <person name="Ohtsubo E."/>
            <person name="Baba T."/>
            <person name="Wanner B.L."/>
            <person name="Mori H."/>
            <person name="Horiuchi T."/>
        </authorList>
    </citation>
    <scope>NUCLEOTIDE SEQUENCE [LARGE SCALE GENOMIC DNA]</scope>
    <source>
        <strain>K12 / W3110 / ATCC 27325 / DSM 5911</strain>
    </source>
</reference>
<reference key="4">
    <citation type="journal article" date="2012" name="Nat. Struct. Mol. Biol.">
        <title>Discovery of an archetypal protein transport system in bacterial outer membranes.</title>
        <authorList>
            <person name="Selkrig J."/>
            <person name="Mosbahi K."/>
            <person name="Webb C.T."/>
            <person name="Belousoff M.J."/>
            <person name="Perry A.J."/>
            <person name="Wells T.J."/>
            <person name="Morris F."/>
            <person name="Leyton D.L."/>
            <person name="Totsika M."/>
            <person name="Phan M.D."/>
            <person name="Celik N."/>
            <person name="Kelly M."/>
            <person name="Oates C."/>
            <person name="Hartland E.L."/>
            <person name="Robins-Browne R.M."/>
            <person name="Ramarathinam S.H."/>
            <person name="Purcell A.W."/>
            <person name="Schembri M.A."/>
            <person name="Strugnell R.A."/>
            <person name="Henderson I.R."/>
            <person name="Walker D."/>
            <person name="Lithgow T."/>
        </authorList>
    </citation>
    <scope>PROTEIN SEQUENCE OF 22-28</scope>
    <scope>FUNCTION IN SECRETION OF AUTOTRANSPORTERS</scope>
    <scope>SUBCELLULAR LOCATION</scope>
    <scope>SUBUNIT</scope>
    <scope>DISRUPTION PHENOTYPE</scope>
    <source>
        <strain>K12 / MG1655 / ATCC 47076</strain>
    </source>
</reference>
<reference key="5">
    <citation type="journal article" date="2006" name="Protein Sci.">
        <title>New Escherichia coli outer membrane proteins identified through prediction and experimental verification.</title>
        <authorList>
            <person name="Marani P."/>
            <person name="Wagner S."/>
            <person name="Baars L."/>
            <person name="Genevaux P."/>
            <person name="de Gier J.W."/>
            <person name="Nilsson I."/>
            <person name="Casadio R."/>
            <person name="von Heijne G."/>
        </authorList>
    </citation>
    <scope>SUBCELLULAR LOCATION</scope>
    <source>
        <strain>K12 / MG1655 / ATCC 47076</strain>
    </source>
</reference>
<reference key="6">
    <citation type="journal article" date="2007" name="Biol. Chem.">
        <title>Characterisation of YtfM, a second member of the Omp85 family in Escherichia coli.</title>
        <authorList>
            <person name="Stegmeier J.F."/>
            <person name="Gluck A."/>
            <person name="Sukumaran S."/>
            <person name="Mantele W."/>
            <person name="Andersen C."/>
        </authorList>
    </citation>
    <scope>SUBCELLULAR LOCATION</scope>
    <scope>POSSIBLE TOPOLOGY</scope>
    <scope>POSSIBLE CHANNEL-FORMING ABILITY</scope>
    <scope>DISRUPTION PHENOTYPE</scope>
    <source>
        <strain>K12 / AG100</strain>
    </source>
</reference>
<reference key="7">
    <citation type="journal article" date="2014" name="Nat. Commun.">
        <title>Reconstitution of a nanomachine driving the assembly of proteins into bacterial outer membranes.</title>
        <authorList>
            <person name="Shen H.H."/>
            <person name="Leyton D.L."/>
            <person name="Shiota T."/>
            <person name="Belousoff M.J."/>
            <person name="Noinaj N."/>
            <person name="Lu J."/>
            <person name="Holt S.A."/>
            <person name="Tan K."/>
            <person name="Selkrig J."/>
            <person name="Webb C.T."/>
            <person name="Buchanan S.K."/>
            <person name="Martin L.L."/>
            <person name="Lithgow T."/>
        </authorList>
    </citation>
    <scope>FUNCTION</scope>
    <scope>SUBUNIT</scope>
    <scope>SUBCELLULAR LOCATION</scope>
    <scope>DOMAIN</scope>
    <scope>TOPOLOGY</scope>
    <source>
        <strain>K12 / BW25113</strain>
    </source>
</reference>
<reference key="8">
    <citation type="journal article" date="2017" name="Mol. Microbiol.">
        <title>Structural basis for substrate selection by the translocation and assembly module of the beta-barrel assembly machinery.</title>
        <authorList>
            <person name="Bamert R.S."/>
            <person name="Lundquist K."/>
            <person name="Hwang H."/>
            <person name="Webb C.T."/>
            <person name="Shiota T."/>
            <person name="Stubenrauch C.J."/>
            <person name="Belousoff M.J."/>
            <person name="Goode R.J.A."/>
            <person name="Schittenhelm R.B."/>
            <person name="Zimmerman R."/>
            <person name="Jung M."/>
            <person name="Gumbart J.C."/>
            <person name="Lithgow T."/>
        </authorList>
    </citation>
    <scope>FUNCTION</scope>
    <scope>DOMAIN</scope>
</reference>
<reference key="9">
    <citation type="journal article" date="2024" name="Nat. Commun.">
        <title>The translocation assembly module (TAM) catalyzes the assembly of bacterial outer membrane proteins in vitro.</title>
        <authorList>
            <person name="Wang X."/>
            <person name="Nyenhuis S.B."/>
            <person name="Bernstein H.D."/>
        </authorList>
    </citation>
    <scope>FUNCTION</scope>
    <scope>ACTIVITY REGULATION</scope>
    <scope>SUBUNIT</scope>
</reference>
<reference evidence="17 18" key="10">
    <citation type="journal article" date="2013" name="Nat. Struct. Mol. Biol.">
        <title>The structural basis of autotransporter translocation by TamA.</title>
        <authorList>
            <person name="Gruss F."/>
            <person name="Zahringer F."/>
            <person name="Jakob R.P."/>
            <person name="Burmann B.M."/>
            <person name="Hiller S."/>
            <person name="Maier T."/>
        </authorList>
    </citation>
    <scope>X-RAY CRYSTALLOGRAPHY (1.84 ANGSTROMS) OF 22-275</scope>
    <scope>X-RAY CRYSTALLOGRAPHY (2.25 ANGSTROMS) OF 22-577</scope>
    <scope>SUBCELLULAR LOCATION</scope>
    <scope>TOPOLOGY</scope>
    <scope>DOMAIN</scope>
</reference>
<reference evidence="16" key="11">
    <citation type="journal article" date="2015" name="Sci. Rep.">
        <title>Conserved features in TamA enable interaction with TamB to drive the activity of the translocation and assembly module.</title>
        <authorList>
            <person name="Selkrig J."/>
            <person name="Belousoff M.J."/>
            <person name="Headey S.J."/>
            <person name="Heinz E."/>
            <person name="Shiota T."/>
            <person name="Shen H.H."/>
            <person name="Beckham S.A."/>
            <person name="Bamert R.S."/>
            <person name="Phan M.D."/>
            <person name="Schembri M.A."/>
            <person name="Wilce M.C."/>
            <person name="Scanlon M.J."/>
            <person name="Strugnell R.A."/>
            <person name="Lithgow T."/>
        </authorList>
    </citation>
    <scope>STRUCTURE BY NMR OF 22-102</scope>
    <scope>SUBUNIT</scope>
    <scope>DOMAIN</scope>
</reference>
<feature type="signal peptide" evidence="4">
    <location>
        <begin position="1"/>
        <end position="21"/>
    </location>
</feature>
<feature type="chain" id="PRO_0000013946" description="Translocation and assembly module subunit TamA">
    <location>
        <begin position="22"/>
        <end position="577"/>
    </location>
</feature>
<feature type="topological domain" description="Periplasmic" evidence="5">
    <location>
        <begin position="22"/>
        <end position="264"/>
    </location>
</feature>
<feature type="transmembrane region" description="Beta stranded" evidence="5">
    <location>
        <begin position="265"/>
        <end position="276"/>
    </location>
</feature>
<feature type="topological domain" description="Extracellular" evidence="5">
    <location>
        <begin position="277"/>
        <end position="278"/>
    </location>
</feature>
<feature type="transmembrane region" description="Beta stranded" evidence="5">
    <location>
        <begin position="279"/>
        <end position="288"/>
    </location>
</feature>
<feature type="topological domain" description="Periplasmic" evidence="5">
    <location>
        <begin position="289"/>
        <end position="296"/>
    </location>
</feature>
<feature type="transmembrane region" description="Beta stranded" evidence="5">
    <location>
        <begin position="297"/>
        <end position="306"/>
    </location>
</feature>
<feature type="topological domain" description="Extracellular" evidence="5">
    <location>
        <begin position="307"/>
        <end position="308"/>
    </location>
</feature>
<feature type="transmembrane region" description="Beta stranded" evidence="5">
    <location>
        <begin position="309"/>
        <end position="317"/>
    </location>
</feature>
<feature type="topological domain" description="Periplasmic" evidence="5">
    <location>
        <begin position="318"/>
        <end position="326"/>
    </location>
</feature>
<feature type="transmembrane region" description="Beta stranded" evidence="5">
    <location>
        <begin position="327"/>
        <end position="336"/>
    </location>
</feature>
<feature type="topological domain" description="Extracellular" evidence="5">
    <location>
        <begin position="337"/>
        <end position="346"/>
    </location>
</feature>
<feature type="transmembrane region" description="Beta stranded" evidence="5">
    <location>
        <begin position="347"/>
        <end position="356"/>
    </location>
</feature>
<feature type="topological domain" description="Periplasmic" evidence="5">
    <location>
        <begin position="357"/>
        <end position="360"/>
    </location>
</feature>
<feature type="transmembrane region" description="Beta stranded" evidence="5">
    <location>
        <begin position="361"/>
        <end position="370"/>
    </location>
</feature>
<feature type="topological domain" description="Extracellular" evidence="5">
    <location>
        <begin position="371"/>
        <end position="386"/>
    </location>
</feature>
<feature type="transmembrane region" description="Beta stranded" evidence="5">
    <location>
        <begin position="387"/>
        <end position="395"/>
    </location>
</feature>
<feature type="topological domain" description="Periplasmic" evidence="5">
    <location>
        <begin position="396"/>
        <end position="405"/>
    </location>
</feature>
<feature type="transmembrane region" description="Beta stranded" evidence="5">
    <location>
        <begin position="406"/>
        <end position="415"/>
    </location>
</feature>
<feature type="topological domain" description="Extracellular" evidence="5">
    <location>
        <begin position="416"/>
        <end position="427"/>
    </location>
</feature>
<feature type="transmembrane region" description="Beta stranded" evidence="5">
    <location>
        <begin position="428"/>
        <end position="437"/>
    </location>
</feature>
<feature type="topological domain" description="Periplasmic" evidence="5 6">
    <location>
        <begin position="438"/>
        <end position="443"/>
    </location>
</feature>
<feature type="transmembrane region" description="Beta stranded" evidence="5">
    <location>
        <begin position="444"/>
        <end position="453"/>
    </location>
</feature>
<feature type="topological domain" description="Extracellular" evidence="5">
    <location>
        <begin position="454"/>
        <end position="499"/>
    </location>
</feature>
<feature type="transmembrane region" description="Beta stranded" evidence="5">
    <location>
        <begin position="500"/>
        <end position="508"/>
    </location>
</feature>
<feature type="topological domain" description="Periplasmic" evidence="5">
    <location>
        <begin position="509"/>
        <end position="513"/>
    </location>
</feature>
<feature type="transmembrane region" description="Beta stranded" evidence="5">
    <location>
        <begin position="514"/>
        <end position="523"/>
    </location>
</feature>
<feature type="topological domain" description="Extracellular" evidence="5">
    <location>
        <begin position="524"/>
        <end position="535"/>
    </location>
</feature>
<feature type="transmembrane region" description="Beta stranded" evidence="5">
    <location>
        <begin position="536"/>
        <end position="545"/>
    </location>
</feature>
<feature type="topological domain" description="Periplasmic" evidence="5">
    <location>
        <begin position="546"/>
        <end position="548"/>
    </location>
</feature>
<feature type="transmembrane region" description="Beta stranded" evidence="5">
    <location>
        <begin position="549"/>
        <end position="557"/>
    </location>
</feature>
<feature type="topological domain" description="Extracellular" evidence="5">
    <location>
        <begin position="558"/>
        <end position="567"/>
    </location>
</feature>
<feature type="transmembrane region" description="Beta stranded" evidence="5">
    <location>
        <begin position="568"/>
        <end position="577"/>
    </location>
</feature>
<feature type="domain" description="POTRA" evidence="1">
    <location>
        <begin position="187"/>
        <end position="263"/>
    </location>
</feature>
<feature type="region of interest" description="POTRA1, required for interaction with TamB" evidence="13">
    <location>
        <begin position="22"/>
        <end position="106"/>
    </location>
</feature>
<feature type="region of interest" description="POTRA2" evidence="13">
    <location>
        <begin position="107"/>
        <end position="170"/>
    </location>
</feature>
<feature type="region of interest" description="POTRA3" evidence="13">
    <location>
        <begin position="171"/>
        <end position="250"/>
    </location>
</feature>
<feature type="region of interest" description="Sufficient for outer membrane targeting">
    <location>
        <begin position="244"/>
        <end position="577"/>
    </location>
</feature>
<feature type="strand" evidence="19">
    <location>
        <begin position="26"/>
        <end position="30"/>
    </location>
</feature>
<feature type="helix" evidence="19">
    <location>
        <begin position="34"/>
        <end position="43"/>
    </location>
</feature>
<feature type="strand" evidence="19">
    <location>
        <begin position="49"/>
        <end position="51"/>
    </location>
</feature>
<feature type="strand" evidence="19">
    <location>
        <begin position="54"/>
        <end position="57"/>
    </location>
</feature>
<feature type="helix" evidence="19">
    <location>
        <begin position="58"/>
        <end position="71"/>
    </location>
</feature>
<feature type="strand" evidence="19">
    <location>
        <begin position="74"/>
        <end position="76"/>
    </location>
</feature>
<feature type="strand" evidence="19">
    <location>
        <begin position="78"/>
        <end position="80"/>
    </location>
</feature>
<feature type="strand" evidence="19">
    <location>
        <begin position="94"/>
        <end position="99"/>
    </location>
</feature>
<feature type="strand" evidence="19">
    <location>
        <begin position="105"/>
        <end position="114"/>
    </location>
</feature>
<feature type="helix" evidence="19">
    <location>
        <begin position="115"/>
        <end position="119"/>
    </location>
</feature>
<feature type="helix" evidence="19">
    <location>
        <begin position="121"/>
        <end position="127"/>
    </location>
</feature>
<feature type="helix" evidence="19">
    <location>
        <begin position="139"/>
        <end position="156"/>
    </location>
</feature>
<feature type="strand" evidence="19">
    <location>
        <begin position="162"/>
        <end position="171"/>
    </location>
</feature>
<feature type="turn" evidence="19">
    <location>
        <begin position="172"/>
        <end position="175"/>
    </location>
</feature>
<feature type="strand" evidence="19">
    <location>
        <begin position="176"/>
        <end position="184"/>
    </location>
</feature>
<feature type="strand" evidence="19">
    <location>
        <begin position="190"/>
        <end position="198"/>
    </location>
</feature>
<feature type="helix" evidence="19">
    <location>
        <begin position="203"/>
        <end position="207"/>
    </location>
</feature>
<feature type="helix" evidence="19">
    <location>
        <begin position="220"/>
        <end position="232"/>
    </location>
</feature>
<feature type="strand" evidence="19">
    <location>
        <begin position="236"/>
        <end position="243"/>
    </location>
</feature>
<feature type="helix" evidence="19">
    <location>
        <begin position="245"/>
        <end position="247"/>
    </location>
</feature>
<feature type="turn" evidence="19">
    <location>
        <begin position="248"/>
        <end position="251"/>
    </location>
</feature>
<feature type="strand" evidence="19">
    <location>
        <begin position="253"/>
        <end position="262"/>
    </location>
</feature>
<feature type="strand" evidence="20">
    <location>
        <begin position="267"/>
        <end position="275"/>
    </location>
</feature>
<feature type="turn" evidence="20">
    <location>
        <begin position="276"/>
        <end position="278"/>
    </location>
</feature>
<feature type="strand" evidence="20">
    <location>
        <begin position="279"/>
        <end position="289"/>
    </location>
</feature>
<feature type="strand" evidence="20">
    <location>
        <begin position="297"/>
        <end position="318"/>
    </location>
</feature>
<feature type="turn" evidence="20">
    <location>
        <begin position="323"/>
        <end position="325"/>
    </location>
</feature>
<feature type="strand" evidence="20">
    <location>
        <begin position="326"/>
        <end position="339"/>
    </location>
</feature>
<feature type="strand" evidence="20">
    <location>
        <begin position="342"/>
        <end position="356"/>
    </location>
</feature>
<feature type="strand" evidence="20">
    <location>
        <begin position="360"/>
        <end position="376"/>
    </location>
</feature>
<feature type="strand" evidence="20">
    <location>
        <begin position="379"/>
        <end position="402"/>
    </location>
</feature>
<feature type="strand" evidence="20">
    <location>
        <begin position="404"/>
        <end position="416"/>
    </location>
</feature>
<feature type="helix" evidence="20">
    <location>
        <begin position="418"/>
        <end position="420"/>
    </location>
</feature>
<feature type="strand" evidence="20">
    <location>
        <begin position="426"/>
        <end position="439"/>
    </location>
</feature>
<feature type="turn" evidence="20">
    <location>
        <begin position="440"/>
        <end position="442"/>
    </location>
</feature>
<feature type="strand" evidence="20">
    <location>
        <begin position="443"/>
        <end position="457"/>
    </location>
</feature>
<feature type="helix" evidence="20">
    <location>
        <begin position="459"/>
        <end position="461"/>
    </location>
</feature>
<feature type="helix" evidence="20">
    <location>
        <begin position="464"/>
        <end position="466"/>
    </location>
</feature>
<feature type="turn" evidence="20">
    <location>
        <begin position="473"/>
        <end position="475"/>
    </location>
</feature>
<feature type="strand" evidence="20">
    <location>
        <begin position="496"/>
        <end position="511"/>
    </location>
</feature>
<feature type="strand" evidence="20">
    <location>
        <begin position="514"/>
        <end position="527"/>
    </location>
</feature>
<feature type="strand" evidence="20">
    <location>
        <begin position="535"/>
        <end position="546"/>
    </location>
</feature>
<feature type="strand" evidence="20">
    <location>
        <begin position="549"/>
        <end position="560"/>
    </location>
</feature>
<feature type="strand" evidence="20">
    <location>
        <begin position="568"/>
        <end position="572"/>
    </location>
</feature>
<name>TAMA_ECOLI</name>
<gene>
    <name evidence="11" type="primary">tamA</name>
    <name evidence="10" type="synonym">yftM</name>
    <name evidence="14" type="synonym">ytfM</name>
    <name evidence="14" type="ordered locus">b4220</name>
    <name evidence="15" type="ordered locus">JW4179</name>
</gene>
<evidence type="ECO:0000255" key="1">
    <source>
        <dbReference type="PROSITE-ProRule" id="PRU01115"/>
    </source>
</evidence>
<evidence type="ECO:0000269" key="2">
    <source>
    </source>
</evidence>
<evidence type="ECO:0000269" key="3">
    <source>
    </source>
</evidence>
<evidence type="ECO:0000269" key="4">
    <source>
    </source>
</evidence>
<evidence type="ECO:0000269" key="5">
    <source>
    </source>
</evidence>
<evidence type="ECO:0000269" key="6">
    <source>
    </source>
</evidence>
<evidence type="ECO:0000269" key="7">
    <source>
    </source>
</evidence>
<evidence type="ECO:0000269" key="8">
    <source>
    </source>
</evidence>
<evidence type="ECO:0000269" key="9">
    <source>
    </source>
</evidence>
<evidence type="ECO:0000303" key="10">
    <source>
    </source>
</evidence>
<evidence type="ECO:0000303" key="11">
    <source>
    </source>
</evidence>
<evidence type="ECO:0000305" key="12"/>
<evidence type="ECO:0000305" key="13">
    <source>
    </source>
</evidence>
<evidence type="ECO:0000312" key="14">
    <source>
        <dbReference type="EMBL" id="AAC77177.1"/>
    </source>
</evidence>
<evidence type="ECO:0000312" key="15">
    <source>
        <dbReference type="EMBL" id="BAE78221.1"/>
    </source>
</evidence>
<evidence type="ECO:0007744" key="16">
    <source>
        <dbReference type="PDB" id="2LY3"/>
    </source>
</evidence>
<evidence type="ECO:0007744" key="17">
    <source>
        <dbReference type="PDB" id="4BZA"/>
    </source>
</evidence>
<evidence type="ECO:0007744" key="18">
    <source>
        <dbReference type="PDB" id="4C00"/>
    </source>
</evidence>
<evidence type="ECO:0007829" key="19">
    <source>
        <dbReference type="PDB" id="4BZA"/>
    </source>
</evidence>
<evidence type="ECO:0007829" key="20">
    <source>
        <dbReference type="PDB" id="4C00"/>
    </source>
</evidence>
<keyword id="KW-0002">3D-structure</keyword>
<keyword id="KW-0998">Cell outer membrane</keyword>
<keyword id="KW-0903">Direct protein sequencing</keyword>
<keyword id="KW-0472">Membrane</keyword>
<keyword id="KW-0653">Protein transport</keyword>
<keyword id="KW-1185">Reference proteome</keyword>
<keyword id="KW-0732">Signal</keyword>
<keyword id="KW-0811">Translocation</keyword>
<keyword id="KW-0812">Transmembrane</keyword>
<keyword id="KW-1134">Transmembrane beta strand</keyword>
<keyword id="KW-0813">Transport</keyword>